<name>EXOC1_MOUSE</name>
<comment type="function">
    <text evidence="1">Component of the exocyst complex involved in the docking of exocytic vesicles with fusion sites on the plasma membrane.</text>
</comment>
<comment type="subunit">
    <text evidence="2">The exocyst complex is composed of EXOC1, EXOC2, EXOC3, EXOC4, EXOC5, EXOC6, EXOC7 and EXOC8. Interacts with EEF1A1. Interacts with SLC6A9; interaction increases the transporter capacity of SLC6A9 probably by promoting its insertion into the cell membrane.</text>
</comment>
<comment type="subcellular location">
    <subcellularLocation>
        <location evidence="2">Midbody</location>
        <location evidence="2">Midbody ring</location>
    </subcellularLocation>
    <subcellularLocation>
        <location evidence="2">Cytoplasm</location>
    </subcellularLocation>
    <subcellularLocation>
        <location evidence="2">Cytoplasm</location>
        <location evidence="2">Perinuclear region</location>
    </subcellularLocation>
    <subcellularLocation>
        <location evidence="2">Cell membrane</location>
    </subcellularLocation>
    <text evidence="2">Colocalizes with CNTRL/centriolin at the midbody ring. Localizes in cell membrane in the presence of SLC6A9.</text>
</comment>
<comment type="similarity">
    <text evidence="5">Belongs to the SEC3 family.</text>
</comment>
<keyword id="KW-1003">Cell membrane</keyword>
<keyword id="KW-0175">Coiled coil</keyword>
<keyword id="KW-0963">Cytoplasm</keyword>
<keyword id="KW-0268">Exocytosis</keyword>
<keyword id="KW-0472">Membrane</keyword>
<keyword id="KW-0597">Phosphoprotein</keyword>
<keyword id="KW-0653">Protein transport</keyword>
<keyword id="KW-1185">Reference proteome</keyword>
<keyword id="KW-0813">Transport</keyword>
<accession>Q8R3S6</accession>
<accession>E9QQ24</accession>
<protein>
    <recommendedName>
        <fullName>Exocyst complex component 1</fullName>
    </recommendedName>
    <alternativeName>
        <fullName>Exocyst complex component Sec3</fullName>
    </alternativeName>
</protein>
<dbReference type="EMBL" id="AC127332">
    <property type="status" value="NOT_ANNOTATED_CDS"/>
    <property type="molecule type" value="Genomic_DNA"/>
</dbReference>
<dbReference type="EMBL" id="BC024678">
    <property type="protein sequence ID" value="AAH24678.1"/>
    <property type="molecule type" value="mRNA"/>
</dbReference>
<dbReference type="CCDS" id="CCDS71607.1"/>
<dbReference type="RefSeq" id="NP_001276699.1">
    <property type="nucleotide sequence ID" value="NM_001289770.2"/>
</dbReference>
<dbReference type="SMR" id="Q8R3S6"/>
<dbReference type="BioGRID" id="213768">
    <property type="interactions" value="9"/>
</dbReference>
<dbReference type="ComplexPortal" id="CPX-4982">
    <property type="entry name" value="Exocyst, Exoc6 variant"/>
</dbReference>
<dbReference type="ComplexPortal" id="CPX-4983">
    <property type="entry name" value="Exocyst, Exoc6b variant"/>
</dbReference>
<dbReference type="FunCoup" id="Q8R3S6">
    <property type="interactions" value="3391"/>
</dbReference>
<dbReference type="STRING" id="10090.ENSMUSP00000109121"/>
<dbReference type="GlyGen" id="Q8R3S6">
    <property type="glycosylation" value="2 sites, 1 N-linked glycan (1 site), 1 O-linked glycan (1 site)"/>
</dbReference>
<dbReference type="iPTMnet" id="Q8R3S6"/>
<dbReference type="PhosphoSitePlus" id="Q8R3S6"/>
<dbReference type="SwissPalm" id="Q8R3S6"/>
<dbReference type="jPOST" id="Q8R3S6"/>
<dbReference type="PaxDb" id="10090-ENSMUSP00000109121"/>
<dbReference type="PeptideAtlas" id="Q8R3S6"/>
<dbReference type="ProteomicsDB" id="275556"/>
<dbReference type="Pumba" id="Q8R3S6"/>
<dbReference type="Antibodypedia" id="23967">
    <property type="antibodies" value="97 antibodies from 23 providers"/>
</dbReference>
<dbReference type="Ensembl" id="ENSMUST00000087133.11">
    <property type="protein sequence ID" value="ENSMUSP00000084373.5"/>
    <property type="gene ID" value="ENSMUSG00000036435.14"/>
</dbReference>
<dbReference type="GeneID" id="69940"/>
<dbReference type="KEGG" id="mmu:69940"/>
<dbReference type="UCSC" id="uc008xva.2">
    <property type="organism name" value="mouse"/>
</dbReference>
<dbReference type="AGR" id="MGI:2445020"/>
<dbReference type="CTD" id="55763"/>
<dbReference type="MGI" id="MGI:2445020">
    <property type="gene designation" value="Exoc1"/>
</dbReference>
<dbReference type="VEuPathDB" id="HostDB:ENSMUSG00000036435"/>
<dbReference type="eggNOG" id="KOG2148">
    <property type="taxonomic scope" value="Eukaryota"/>
</dbReference>
<dbReference type="GeneTree" id="ENSGT00940000158640"/>
<dbReference type="HOGENOM" id="CLU_015381_1_0_1"/>
<dbReference type="InParanoid" id="Q8R3S6"/>
<dbReference type="OrthoDB" id="27109at2759"/>
<dbReference type="Reactome" id="R-MMU-264876">
    <property type="pathway name" value="Insulin processing"/>
</dbReference>
<dbReference type="Reactome" id="R-MMU-5620916">
    <property type="pathway name" value="VxPx cargo-targeting to cilium"/>
</dbReference>
<dbReference type="BioGRID-ORCS" id="69940">
    <property type="hits" value="12 hits in 78 CRISPR screens"/>
</dbReference>
<dbReference type="CD-CODE" id="CE726F99">
    <property type="entry name" value="Postsynaptic density"/>
</dbReference>
<dbReference type="ChiTaRS" id="Exoc1">
    <property type="organism name" value="mouse"/>
</dbReference>
<dbReference type="PRO" id="PR:Q8R3S6"/>
<dbReference type="Proteomes" id="UP000000589">
    <property type="component" value="Chromosome 5"/>
</dbReference>
<dbReference type="RNAct" id="Q8R3S6">
    <property type="molecule type" value="protein"/>
</dbReference>
<dbReference type="Bgee" id="ENSMUSG00000036435">
    <property type="expression patterns" value="Expressed in retinal neural layer and 253 other cell types or tissues"/>
</dbReference>
<dbReference type="ExpressionAtlas" id="Q8R3S6">
    <property type="expression patterns" value="baseline and differential"/>
</dbReference>
<dbReference type="GO" id="GO:0005737">
    <property type="term" value="C:cytoplasm"/>
    <property type="evidence" value="ECO:0000250"/>
    <property type="project" value="UniProtKB"/>
</dbReference>
<dbReference type="GO" id="GO:0000145">
    <property type="term" value="C:exocyst"/>
    <property type="evidence" value="ECO:0000303"/>
    <property type="project" value="ComplexPortal"/>
</dbReference>
<dbReference type="GO" id="GO:0090543">
    <property type="term" value="C:Flemming body"/>
    <property type="evidence" value="ECO:0007669"/>
    <property type="project" value="UniProtKB-SubCell"/>
</dbReference>
<dbReference type="GO" id="GO:0048471">
    <property type="term" value="C:perinuclear region of cytoplasm"/>
    <property type="evidence" value="ECO:0007669"/>
    <property type="project" value="UniProtKB-SubCell"/>
</dbReference>
<dbReference type="GO" id="GO:0005886">
    <property type="term" value="C:plasma membrane"/>
    <property type="evidence" value="ECO:0000250"/>
    <property type="project" value="UniProtKB"/>
</dbReference>
<dbReference type="GO" id="GO:0007566">
    <property type="term" value="P:embryo implantation"/>
    <property type="evidence" value="ECO:0000315"/>
    <property type="project" value="MGI"/>
</dbReference>
<dbReference type="GO" id="GO:0090148">
    <property type="term" value="P:membrane fission"/>
    <property type="evidence" value="ECO:0000303"/>
    <property type="project" value="ComplexPortal"/>
</dbReference>
<dbReference type="GO" id="GO:0000281">
    <property type="term" value="P:mitotic cytokinesis"/>
    <property type="evidence" value="ECO:0000303"/>
    <property type="project" value="ComplexPortal"/>
</dbReference>
<dbReference type="GO" id="GO:0015031">
    <property type="term" value="P:protein transport"/>
    <property type="evidence" value="ECO:0007669"/>
    <property type="project" value="UniProtKB-KW"/>
</dbReference>
<dbReference type="GO" id="GO:0006904">
    <property type="term" value="P:vesicle docking involved in exocytosis"/>
    <property type="evidence" value="ECO:0000303"/>
    <property type="project" value="ComplexPortal"/>
</dbReference>
<dbReference type="GO" id="GO:0090522">
    <property type="term" value="P:vesicle tethering involved in exocytosis"/>
    <property type="evidence" value="ECO:0000303"/>
    <property type="project" value="ComplexPortal"/>
</dbReference>
<dbReference type="CDD" id="cd14683">
    <property type="entry name" value="PH-EXOC1"/>
    <property type="match status" value="1"/>
</dbReference>
<dbReference type="FunFam" id="2.30.29.90:FF:000001">
    <property type="entry name" value="exocyst complex component 1 isoform X1"/>
    <property type="match status" value="1"/>
</dbReference>
<dbReference type="Gene3D" id="2.30.29.90">
    <property type="match status" value="1"/>
</dbReference>
<dbReference type="InterPro" id="IPR028258">
    <property type="entry name" value="Sec3-PIP2_bind"/>
</dbReference>
<dbReference type="InterPro" id="IPR048628">
    <property type="entry name" value="Sec3_C"/>
</dbReference>
<dbReference type="InterPro" id="IPR019160">
    <property type="entry name" value="Sec3_CC"/>
</dbReference>
<dbReference type="PANTHER" id="PTHR16092:SF33">
    <property type="entry name" value="EXOCYST COMPLEX COMPONENT 1"/>
    <property type="match status" value="1"/>
</dbReference>
<dbReference type="PANTHER" id="PTHR16092">
    <property type="entry name" value="SEC3/SYNTAXIN-RELATED"/>
    <property type="match status" value="1"/>
</dbReference>
<dbReference type="Pfam" id="PF15277">
    <property type="entry name" value="Sec3-PIP2_bind"/>
    <property type="match status" value="1"/>
</dbReference>
<dbReference type="Pfam" id="PF20654">
    <property type="entry name" value="Sec3_C-term"/>
    <property type="match status" value="1"/>
</dbReference>
<dbReference type="Pfam" id="PF09763">
    <property type="entry name" value="Sec3_CC"/>
    <property type="match status" value="1"/>
</dbReference>
<dbReference type="SMART" id="SM01313">
    <property type="entry name" value="Sec3-PIP2_bind"/>
    <property type="match status" value="1"/>
</dbReference>
<gene>
    <name type="primary">Exoc1</name>
    <name type="synonym">Sec3</name>
    <name type="synonym">Sec3l1</name>
</gene>
<evidence type="ECO:0000250" key="1"/>
<evidence type="ECO:0000250" key="2">
    <source>
        <dbReference type="UniProtKB" id="Q9NV70"/>
    </source>
</evidence>
<evidence type="ECO:0000255" key="3"/>
<evidence type="ECO:0000256" key="4">
    <source>
        <dbReference type="SAM" id="MobiDB-lite"/>
    </source>
</evidence>
<evidence type="ECO:0000305" key="5"/>
<evidence type="ECO:0007744" key="6">
    <source>
    </source>
</evidence>
<evidence type="ECO:0007744" key="7">
    <source>
    </source>
</evidence>
<proteinExistence type="evidence at protein level"/>
<organism>
    <name type="scientific">Mus musculus</name>
    <name type="common">Mouse</name>
    <dbReference type="NCBI Taxonomy" id="10090"/>
    <lineage>
        <taxon>Eukaryota</taxon>
        <taxon>Metazoa</taxon>
        <taxon>Chordata</taxon>
        <taxon>Craniata</taxon>
        <taxon>Vertebrata</taxon>
        <taxon>Euteleostomi</taxon>
        <taxon>Mammalia</taxon>
        <taxon>Eutheria</taxon>
        <taxon>Euarchontoglires</taxon>
        <taxon>Glires</taxon>
        <taxon>Rodentia</taxon>
        <taxon>Myomorpha</taxon>
        <taxon>Muroidea</taxon>
        <taxon>Muridae</taxon>
        <taxon>Murinae</taxon>
        <taxon>Mus</taxon>
        <taxon>Mus</taxon>
    </lineage>
</organism>
<feature type="chain" id="PRO_0000118914" description="Exocyst complex component 1">
    <location>
        <begin position="1"/>
        <end position="894"/>
    </location>
</feature>
<feature type="region of interest" description="Disordered" evidence="4">
    <location>
        <begin position="437"/>
        <end position="495"/>
    </location>
</feature>
<feature type="coiled-coil region" evidence="3">
    <location>
        <begin position="152"/>
        <end position="199"/>
    </location>
</feature>
<feature type="coiled-coil region" evidence="3">
    <location>
        <begin position="205"/>
        <end position="259"/>
    </location>
</feature>
<feature type="compositionally biased region" description="Basic and acidic residues" evidence="4">
    <location>
        <begin position="438"/>
        <end position="459"/>
    </location>
</feature>
<feature type="compositionally biased region" description="Low complexity" evidence="4">
    <location>
        <begin position="460"/>
        <end position="491"/>
    </location>
</feature>
<feature type="modified residue" description="Phosphoserine" evidence="6">
    <location>
        <position position="470"/>
    </location>
</feature>
<feature type="modified residue" description="Phosphothreonine" evidence="2">
    <location>
        <position position="471"/>
    </location>
</feature>
<feature type="modified residue" description="Phosphoserine" evidence="6">
    <location>
        <position position="473"/>
    </location>
</feature>
<feature type="modified residue" description="Phosphoserine" evidence="2">
    <location>
        <position position="487"/>
    </location>
</feature>
<feature type="modified residue" description="Phosphoserine" evidence="7">
    <location>
        <position position="501"/>
    </location>
</feature>
<feature type="sequence conflict" description="In Ref. 2; AAH24678." evidence="5" ref="2">
    <original>V</original>
    <variation>I</variation>
    <location>
        <position position="329"/>
    </location>
</feature>
<feature type="sequence conflict" description="In Ref. 2; AAH24678." evidence="5" ref="2">
    <original>L</original>
    <variation>S</variation>
    <location>
        <position position="561"/>
    </location>
</feature>
<reference key="1">
    <citation type="journal article" date="2009" name="PLoS Biol.">
        <title>Lineage-specific biology revealed by a finished genome assembly of the mouse.</title>
        <authorList>
            <person name="Church D.M."/>
            <person name="Goodstadt L."/>
            <person name="Hillier L.W."/>
            <person name="Zody M.C."/>
            <person name="Goldstein S."/>
            <person name="She X."/>
            <person name="Bult C.J."/>
            <person name="Agarwala R."/>
            <person name="Cherry J.L."/>
            <person name="DiCuccio M."/>
            <person name="Hlavina W."/>
            <person name="Kapustin Y."/>
            <person name="Meric P."/>
            <person name="Maglott D."/>
            <person name="Birtle Z."/>
            <person name="Marques A.C."/>
            <person name="Graves T."/>
            <person name="Zhou S."/>
            <person name="Teague B."/>
            <person name="Potamousis K."/>
            <person name="Churas C."/>
            <person name="Place M."/>
            <person name="Herschleb J."/>
            <person name="Runnheim R."/>
            <person name="Forrest D."/>
            <person name="Amos-Landgraf J."/>
            <person name="Schwartz D.C."/>
            <person name="Cheng Z."/>
            <person name="Lindblad-Toh K."/>
            <person name="Eichler E.E."/>
            <person name="Ponting C.P."/>
        </authorList>
    </citation>
    <scope>NUCLEOTIDE SEQUENCE [LARGE SCALE GENOMIC DNA]</scope>
    <source>
        <strain>C57BL/6J</strain>
    </source>
</reference>
<reference key="2">
    <citation type="journal article" date="2004" name="Genome Res.">
        <title>The status, quality, and expansion of the NIH full-length cDNA project: the Mammalian Gene Collection (MGC).</title>
        <authorList>
            <consortium name="The MGC Project Team"/>
        </authorList>
    </citation>
    <scope>NUCLEOTIDE SEQUENCE [LARGE SCALE MRNA]</scope>
</reference>
<reference key="3">
    <citation type="journal article" date="2007" name="Proc. Natl. Acad. Sci. U.S.A.">
        <title>Large-scale phosphorylation analysis of mouse liver.</title>
        <authorList>
            <person name="Villen J."/>
            <person name="Beausoleil S.A."/>
            <person name="Gerber S.A."/>
            <person name="Gygi S.P."/>
        </authorList>
    </citation>
    <scope>IDENTIFICATION BY MASS SPECTROMETRY [LARGE SCALE ANALYSIS]</scope>
    <source>
        <tissue>Liver</tissue>
    </source>
</reference>
<reference key="4">
    <citation type="journal article" date="2009" name="Immunity">
        <title>The phagosomal proteome in interferon-gamma-activated macrophages.</title>
        <authorList>
            <person name="Trost M."/>
            <person name="English L."/>
            <person name="Lemieux S."/>
            <person name="Courcelles M."/>
            <person name="Desjardins M."/>
            <person name="Thibault P."/>
        </authorList>
    </citation>
    <scope>PHOSPHORYLATION [LARGE SCALE ANALYSIS] AT SER-470 AND SER-473</scope>
    <scope>IDENTIFICATION BY MASS SPECTROMETRY [LARGE SCALE ANALYSIS]</scope>
</reference>
<reference key="5">
    <citation type="journal article" date="2010" name="Cell">
        <title>A tissue-specific atlas of mouse protein phosphorylation and expression.</title>
        <authorList>
            <person name="Huttlin E.L."/>
            <person name="Jedrychowski M.P."/>
            <person name="Elias J.E."/>
            <person name="Goswami T."/>
            <person name="Rad R."/>
            <person name="Beausoleil S.A."/>
            <person name="Villen J."/>
            <person name="Haas W."/>
            <person name="Sowa M.E."/>
            <person name="Gygi S.P."/>
        </authorList>
    </citation>
    <scope>PHOSPHORYLATION [LARGE SCALE ANALYSIS] AT SER-501</scope>
    <scope>IDENTIFICATION BY MASS SPECTROMETRY [LARGE SCALE ANALYSIS]</scope>
    <source>
        <tissue>Brain</tissue>
        <tissue>Brown adipose tissue</tissue>
        <tissue>Heart</tissue>
        <tissue>Kidney</tissue>
        <tissue>Lung</tissue>
        <tissue>Spleen</tissue>
        <tissue>Testis</tissue>
    </source>
</reference>
<sequence>MTAIKHALQRDIFTPNDERLLSIVNVCKAGKKKKNCFLCATVTTERPVQVKVVKVKKSDKGDFYKRQIAWALRDLAVVDAKDAIKENPEFDLHFEKVYKWVASSTAEKNAFISCIWKLNQRYLRKKIDFVNVSSQLLEESVPSGENQSVAGGDEEAVDEYQELNAREEQDIEIMMEGCECAISNAEAFAEKLSRELQVLDGANIQSIMASEKQVNTLMQLLDEALTEVDQIELKLSSYEEMLQSVKEQMDQISESNHLIHLSNTNNVKLLSEIEFLVNHMDLAKGHIKALQEGDLVSSRGIEACTNAADALLQCMNVALRPGHDMLLAVKQQQQRFSDLREHFARRLASHLNNVFVQQGHDQSSTLAQHSVELTLPNHHPFHRDLLRYAKLMEWLKSTDYGKYEGLTKNYMDYLSRLYEREIKDFFEVAKMKMTGTSKESKKFATLPRKESAVKQETESLHGSSGKLTGSTSSLNKLSVQSSGSRRSQSSSLLDMGNMSASDLDVADRTKFDKIFEQVLSELEPLCLAEQDFISKFFKLQQHQNMSASMTEAEDLDGGSLLRQHSSGTLLPVSSEKDMIRQMMIKIFRCIEPELNNLIALGDKVDSFNSLYMLVKMSHHVWTAQNVDPASFLSTTLGNVLVTVKRNFDKCISNQIRQMEEVKISKKSKVGILPFVAEFEEFAGLAESIFKNAERRGDLDKAYTKLIRGVFINVEKVANESQKTPRDVVMMENFHHIFATLSRLKISCLEAEKKEAKQKYTDHLQSYVIYSLGQPLEKLNHFFEGVEARVAQGIREEEVSYQLAFNKQELRKVIKEYPGKEVKKGLDNLYKKVDKHLCEEENLLQVVWHSMQDEFIRQYKHFEGLIARCYPGSGVTMEFTIQDILDYCSSIAQSH</sequence>